<feature type="chain" id="PRO_0000182238" description="Arginine deiminase">
    <location>
        <begin position="1"/>
        <end position="411"/>
    </location>
</feature>
<feature type="active site" description="Amidino-cysteine intermediate" evidence="1">
    <location>
        <position position="401"/>
    </location>
</feature>
<proteinExistence type="inferred from homology"/>
<name>ARCA_STAAS</name>
<evidence type="ECO:0000255" key="1">
    <source>
        <dbReference type="HAMAP-Rule" id="MF_00242"/>
    </source>
</evidence>
<gene>
    <name evidence="1" type="primary">arcA</name>
    <name type="ordered locus">SAS2521</name>
</gene>
<dbReference type="EC" id="3.5.3.6" evidence="1"/>
<dbReference type="EMBL" id="BX571857">
    <property type="protein sequence ID" value="CAG44338.1"/>
    <property type="molecule type" value="Genomic_DNA"/>
</dbReference>
<dbReference type="RefSeq" id="WP_000129411.1">
    <property type="nucleotide sequence ID" value="NC_002953.3"/>
</dbReference>
<dbReference type="SMR" id="Q6G639"/>
<dbReference type="KEGG" id="sas:SAS2521"/>
<dbReference type="HOGENOM" id="CLU_052662_0_1_9"/>
<dbReference type="UniPathway" id="UPA00254">
    <property type="reaction ID" value="UER00364"/>
</dbReference>
<dbReference type="GO" id="GO:0005737">
    <property type="term" value="C:cytoplasm"/>
    <property type="evidence" value="ECO:0007669"/>
    <property type="project" value="UniProtKB-SubCell"/>
</dbReference>
<dbReference type="GO" id="GO:0016990">
    <property type="term" value="F:arginine deiminase activity"/>
    <property type="evidence" value="ECO:0007669"/>
    <property type="project" value="UniProtKB-UniRule"/>
</dbReference>
<dbReference type="GO" id="GO:0019547">
    <property type="term" value="P:arginine catabolic process to ornithine"/>
    <property type="evidence" value="ECO:0007669"/>
    <property type="project" value="UniProtKB-UniRule"/>
</dbReference>
<dbReference type="GO" id="GO:0019546">
    <property type="term" value="P:arginine deiminase pathway"/>
    <property type="evidence" value="ECO:0007669"/>
    <property type="project" value="TreeGrafter"/>
</dbReference>
<dbReference type="FunFam" id="1.10.3930.10:FF:000001">
    <property type="entry name" value="Arginine deiminase"/>
    <property type="match status" value="1"/>
</dbReference>
<dbReference type="Gene3D" id="1.10.3930.10">
    <property type="entry name" value="Arginine deiminase"/>
    <property type="match status" value="1"/>
</dbReference>
<dbReference type="Gene3D" id="3.75.10.10">
    <property type="entry name" value="L-arginine/glycine Amidinotransferase, Chain A"/>
    <property type="match status" value="1"/>
</dbReference>
<dbReference type="HAMAP" id="MF_00242">
    <property type="entry name" value="Arg_deiminase"/>
    <property type="match status" value="1"/>
</dbReference>
<dbReference type="InterPro" id="IPR003876">
    <property type="entry name" value="Arg_deiminase"/>
</dbReference>
<dbReference type="NCBIfam" id="TIGR01078">
    <property type="entry name" value="arcA"/>
    <property type="match status" value="1"/>
</dbReference>
<dbReference type="NCBIfam" id="NF002381">
    <property type="entry name" value="PRK01388.1"/>
    <property type="match status" value="1"/>
</dbReference>
<dbReference type="PANTHER" id="PTHR47271">
    <property type="entry name" value="ARGININE DEIMINASE"/>
    <property type="match status" value="1"/>
</dbReference>
<dbReference type="PANTHER" id="PTHR47271:SF2">
    <property type="entry name" value="ARGININE DEIMINASE"/>
    <property type="match status" value="1"/>
</dbReference>
<dbReference type="Pfam" id="PF02274">
    <property type="entry name" value="ADI"/>
    <property type="match status" value="1"/>
</dbReference>
<dbReference type="PIRSF" id="PIRSF006356">
    <property type="entry name" value="Arg_deiminase"/>
    <property type="match status" value="1"/>
</dbReference>
<dbReference type="PRINTS" id="PR01466">
    <property type="entry name" value="ARGDEIMINASE"/>
</dbReference>
<dbReference type="SUPFAM" id="SSF55909">
    <property type="entry name" value="Pentein"/>
    <property type="match status" value="1"/>
</dbReference>
<keyword id="KW-0056">Arginine metabolism</keyword>
<keyword id="KW-0963">Cytoplasm</keyword>
<keyword id="KW-0378">Hydrolase</keyword>
<protein>
    <recommendedName>
        <fullName evidence="1">Arginine deiminase</fullName>
        <shortName evidence="1">ADI</shortName>
        <ecNumber evidence="1">3.5.3.6</ecNumber>
    </recommendedName>
    <alternativeName>
        <fullName evidence="1">Arginine dihydrolase</fullName>
        <shortName evidence="1">AD</shortName>
    </alternativeName>
</protein>
<reference key="1">
    <citation type="journal article" date="2004" name="Proc. Natl. Acad. Sci. U.S.A.">
        <title>Complete genomes of two clinical Staphylococcus aureus strains: evidence for the rapid evolution of virulence and drug resistance.</title>
        <authorList>
            <person name="Holden M.T.G."/>
            <person name="Feil E.J."/>
            <person name="Lindsay J.A."/>
            <person name="Peacock S.J."/>
            <person name="Day N.P.J."/>
            <person name="Enright M.C."/>
            <person name="Foster T.J."/>
            <person name="Moore C.E."/>
            <person name="Hurst L."/>
            <person name="Atkin R."/>
            <person name="Barron A."/>
            <person name="Bason N."/>
            <person name="Bentley S.D."/>
            <person name="Chillingworth C."/>
            <person name="Chillingworth T."/>
            <person name="Churcher C."/>
            <person name="Clark L."/>
            <person name="Corton C."/>
            <person name="Cronin A."/>
            <person name="Doggett J."/>
            <person name="Dowd L."/>
            <person name="Feltwell T."/>
            <person name="Hance Z."/>
            <person name="Harris B."/>
            <person name="Hauser H."/>
            <person name="Holroyd S."/>
            <person name="Jagels K."/>
            <person name="James K.D."/>
            <person name="Lennard N."/>
            <person name="Line A."/>
            <person name="Mayes R."/>
            <person name="Moule S."/>
            <person name="Mungall K."/>
            <person name="Ormond D."/>
            <person name="Quail M.A."/>
            <person name="Rabbinowitsch E."/>
            <person name="Rutherford K.M."/>
            <person name="Sanders M."/>
            <person name="Sharp S."/>
            <person name="Simmonds M."/>
            <person name="Stevens K."/>
            <person name="Whitehead S."/>
            <person name="Barrell B.G."/>
            <person name="Spratt B.G."/>
            <person name="Parkhill J."/>
        </authorList>
    </citation>
    <scope>NUCLEOTIDE SEQUENCE [LARGE SCALE GENOMIC DNA]</scope>
    <source>
        <strain>MSSA476</strain>
    </source>
</reference>
<sequence>MTDGPIKVNSEIGALKTVLLKRPGKELENLVPDYLDGLLFDDIPYLEVAQKEHDHFAQVLREEGVEVLYLEKLAAESIENPQVRSEFIDDVLAESKKTILGHEEEIKALFATLSNQELVDKIMSGVRKEEINPKCTHLVEYMDDKYPFYLDPMPNLYFTRDPQASIGHGITINRMFWRARRRESIFIQYIVKHHPRFKDANIPIWLDRDCPFNIEGGDELVLSKDVLAIGVSERTSAQAIEKLARRIFENPQATFKKVVAIEIPTSRTFMHLDTVFTMIDYDKFTMHSAILKAEGNMNIFIIEYDDVNKDIAIKQSSHLKDTLEDVLGIDDIQFIPTGNGDVIDGAREQWNDGSNTLCIRPGVVVTYDRNYVSNDLLRQKGIKVIEISGSELVRGRGGPRCMSQPLFREDI</sequence>
<accession>Q6G639</accession>
<organism>
    <name type="scientific">Staphylococcus aureus (strain MSSA476)</name>
    <dbReference type="NCBI Taxonomy" id="282459"/>
    <lineage>
        <taxon>Bacteria</taxon>
        <taxon>Bacillati</taxon>
        <taxon>Bacillota</taxon>
        <taxon>Bacilli</taxon>
        <taxon>Bacillales</taxon>
        <taxon>Staphylococcaceae</taxon>
        <taxon>Staphylococcus</taxon>
    </lineage>
</organism>
<comment type="catalytic activity">
    <reaction evidence="1">
        <text>L-arginine + H2O = L-citrulline + NH4(+)</text>
        <dbReference type="Rhea" id="RHEA:19597"/>
        <dbReference type="ChEBI" id="CHEBI:15377"/>
        <dbReference type="ChEBI" id="CHEBI:28938"/>
        <dbReference type="ChEBI" id="CHEBI:32682"/>
        <dbReference type="ChEBI" id="CHEBI:57743"/>
        <dbReference type="EC" id="3.5.3.6"/>
    </reaction>
</comment>
<comment type="pathway">
    <text evidence="1">Amino-acid degradation; L-arginine degradation via ADI pathway; carbamoyl phosphate from L-arginine: step 1/2.</text>
</comment>
<comment type="subcellular location">
    <subcellularLocation>
        <location evidence="1">Cytoplasm</location>
    </subcellularLocation>
</comment>
<comment type="similarity">
    <text evidence="1">Belongs to the arginine deiminase family.</text>
</comment>